<protein>
    <recommendedName>
        <fullName evidence="1">Cytosolic Fe-S cluster assembly factor nbp35</fullName>
    </recommendedName>
    <alternativeName>
        <fullName evidence="1">Nucleotide-binding protein 35</fullName>
    </alternativeName>
</protein>
<sequence>MAPSFTETTSTYLEAPSKAPPNLVAPEPEHCPGPESDQAGQGDACAGCPNQSICASAPKGPDPDIPLITARLASVRHKILVLSGKGGVGKSTFSSLLAHGFASNPDSTVGIMDTDICGPSIPKMMGVESETIHISNAGWSPVWVSDNLGVMSVQFMLPNRDDAVIWRGPKKNGLIKQFLKDVDWGEMDYLIVDTPPGTSDEHLSVNSLLKESGVDGAVVVTTPQEVSLLDVRKEIDFCRKAGIRILGLVENMSGFVCPSCDHESKIFRATTGGGKRLAKKMGIPFLGAVPLDPRVGMACDYGESFVENFPDSPASLAIKQVVRAVGRFVGEDPDSVLPDAE</sequence>
<comment type="function">
    <text evidence="1">Component of the cytosolic iron-sulfur (Fe/S) protein assembly (CIA) machinery. Required for maturation of extramitochondrial Fe-S proteins. The nbp35-cfd1 heterotetramer forms a Fe-S scaffold complex, mediating the de novo assembly of an Fe-S cluster and its transfer to target apoproteins.</text>
</comment>
<comment type="cofactor">
    <cofactor evidence="1">
        <name>[4Fe-4S] cluster</name>
        <dbReference type="ChEBI" id="CHEBI:49883"/>
    </cofactor>
    <text evidence="1">Binds 4 [4Fe-4S] clusters per heterotetramer. Contains two stable clusters in the N-termini of nbp35 and two labile, bridging clusters between subunits of the nbp35-cfd1 heterotetramer.</text>
</comment>
<comment type="subunit">
    <text evidence="1">Heterotetramer of 2 nbp35 and 2 cfd1 chains.</text>
</comment>
<comment type="subcellular location">
    <subcellularLocation>
        <location evidence="1">Cytoplasm</location>
    </subcellularLocation>
</comment>
<comment type="similarity">
    <text evidence="1">Belongs to the Mrp/NBP35 ATP-binding proteins family. NUBP1/NBP35 subfamily.</text>
</comment>
<keyword id="KW-0004">4Fe-4S</keyword>
<keyword id="KW-0067">ATP-binding</keyword>
<keyword id="KW-0963">Cytoplasm</keyword>
<keyword id="KW-0408">Iron</keyword>
<keyword id="KW-0411">Iron-sulfur</keyword>
<keyword id="KW-0479">Metal-binding</keyword>
<keyword id="KW-0547">Nucleotide-binding</keyword>
<keyword id="KW-1185">Reference proteome</keyword>
<feature type="chain" id="PRO_0000278897" description="Cytosolic Fe-S cluster assembly factor nbp35">
    <location>
        <begin position="1"/>
        <end position="341"/>
    </location>
</feature>
<feature type="region of interest" description="Disordered" evidence="2">
    <location>
        <begin position="1"/>
        <end position="44"/>
    </location>
</feature>
<feature type="compositionally biased region" description="Polar residues" evidence="2">
    <location>
        <begin position="1"/>
        <end position="12"/>
    </location>
</feature>
<feature type="binding site" evidence="1">
    <location>
        <position position="31"/>
    </location>
    <ligand>
        <name>[4Fe-4S] cluster</name>
        <dbReference type="ChEBI" id="CHEBI:49883"/>
        <label>1</label>
    </ligand>
</feature>
<feature type="binding site" evidence="1">
    <location>
        <position position="45"/>
    </location>
    <ligand>
        <name>[4Fe-4S] cluster</name>
        <dbReference type="ChEBI" id="CHEBI:49883"/>
        <label>1</label>
    </ligand>
</feature>
<feature type="binding site" evidence="1">
    <location>
        <position position="48"/>
    </location>
    <ligand>
        <name>[4Fe-4S] cluster</name>
        <dbReference type="ChEBI" id="CHEBI:49883"/>
        <label>1</label>
    </ligand>
</feature>
<feature type="binding site" evidence="1">
    <location>
        <position position="54"/>
    </location>
    <ligand>
        <name>[4Fe-4S] cluster</name>
        <dbReference type="ChEBI" id="CHEBI:49883"/>
        <label>1</label>
    </ligand>
</feature>
<feature type="binding site" evidence="1">
    <location>
        <begin position="84"/>
        <end position="91"/>
    </location>
    <ligand>
        <name>ATP</name>
        <dbReference type="ChEBI" id="CHEBI:30616"/>
    </ligand>
</feature>
<feature type="binding site" evidence="1">
    <location>
        <position position="257"/>
    </location>
    <ligand>
        <name>[4Fe-4S] cluster</name>
        <dbReference type="ChEBI" id="CHEBI:49883"/>
        <label>2</label>
        <note>ligand shared with heterodimeric partner</note>
    </ligand>
</feature>
<feature type="binding site" evidence="1">
    <location>
        <position position="260"/>
    </location>
    <ligand>
        <name>[4Fe-4S] cluster</name>
        <dbReference type="ChEBI" id="CHEBI:49883"/>
        <label>2</label>
        <note>ligand shared with heterodimeric partner</note>
    </ligand>
</feature>
<organism>
    <name type="scientific">Emericella nidulans (strain FGSC A4 / ATCC 38163 / CBS 112.46 / NRRL 194 / M139)</name>
    <name type="common">Aspergillus nidulans</name>
    <dbReference type="NCBI Taxonomy" id="227321"/>
    <lineage>
        <taxon>Eukaryota</taxon>
        <taxon>Fungi</taxon>
        <taxon>Dikarya</taxon>
        <taxon>Ascomycota</taxon>
        <taxon>Pezizomycotina</taxon>
        <taxon>Eurotiomycetes</taxon>
        <taxon>Eurotiomycetidae</taxon>
        <taxon>Eurotiales</taxon>
        <taxon>Aspergillaceae</taxon>
        <taxon>Aspergillus</taxon>
        <taxon>Aspergillus subgen. Nidulantes</taxon>
    </lineage>
</organism>
<accession>Q5BBC5</accession>
<accession>C8VM88</accession>
<proteinExistence type="inferred from homology"/>
<evidence type="ECO:0000255" key="1">
    <source>
        <dbReference type="HAMAP-Rule" id="MF_03038"/>
    </source>
</evidence>
<evidence type="ECO:0000256" key="2">
    <source>
        <dbReference type="SAM" id="MobiDB-lite"/>
    </source>
</evidence>
<dbReference type="EMBL" id="AACD01000034">
    <property type="protein sequence ID" value="EAA64199.1"/>
    <property type="molecule type" value="Genomic_DNA"/>
</dbReference>
<dbReference type="EMBL" id="BN001307">
    <property type="protein sequence ID" value="CBF86282.1"/>
    <property type="molecule type" value="Genomic_DNA"/>
</dbReference>
<dbReference type="RefSeq" id="XP_659759.1">
    <property type="nucleotide sequence ID" value="XM_654667.1"/>
</dbReference>
<dbReference type="SMR" id="Q5BBC5"/>
<dbReference type="FunCoup" id="Q5BBC5">
    <property type="interactions" value="572"/>
</dbReference>
<dbReference type="STRING" id="227321.Q5BBC5"/>
<dbReference type="EnsemblFungi" id="CBF86282">
    <property type="protein sequence ID" value="CBF86282"/>
    <property type="gene ID" value="ANIA_02155"/>
</dbReference>
<dbReference type="KEGG" id="ani:ANIA_02155"/>
<dbReference type="VEuPathDB" id="FungiDB:AN2155"/>
<dbReference type="eggNOG" id="KOG3022">
    <property type="taxonomic scope" value="Eukaryota"/>
</dbReference>
<dbReference type="HOGENOM" id="CLU_024839_0_1_1"/>
<dbReference type="InParanoid" id="Q5BBC5"/>
<dbReference type="OMA" id="VSGCPMR"/>
<dbReference type="OrthoDB" id="1741334at2759"/>
<dbReference type="Proteomes" id="UP000000560">
    <property type="component" value="Chromosome VII"/>
</dbReference>
<dbReference type="GO" id="GO:0005829">
    <property type="term" value="C:cytosol"/>
    <property type="evidence" value="ECO:0000318"/>
    <property type="project" value="GO_Central"/>
</dbReference>
<dbReference type="GO" id="GO:0051539">
    <property type="term" value="F:4 iron, 4 sulfur cluster binding"/>
    <property type="evidence" value="ECO:0007669"/>
    <property type="project" value="UniProtKB-UniRule"/>
</dbReference>
<dbReference type="GO" id="GO:0005524">
    <property type="term" value="F:ATP binding"/>
    <property type="evidence" value="ECO:0007669"/>
    <property type="project" value="UniProtKB-KW"/>
</dbReference>
<dbReference type="GO" id="GO:0140663">
    <property type="term" value="F:ATP-dependent FeS chaperone activity"/>
    <property type="evidence" value="ECO:0007669"/>
    <property type="project" value="InterPro"/>
</dbReference>
<dbReference type="GO" id="GO:0051536">
    <property type="term" value="F:iron-sulfur cluster binding"/>
    <property type="evidence" value="ECO:0000318"/>
    <property type="project" value="GO_Central"/>
</dbReference>
<dbReference type="GO" id="GO:0046872">
    <property type="term" value="F:metal ion binding"/>
    <property type="evidence" value="ECO:0007669"/>
    <property type="project" value="UniProtKB-KW"/>
</dbReference>
<dbReference type="GO" id="GO:0016226">
    <property type="term" value="P:iron-sulfur cluster assembly"/>
    <property type="evidence" value="ECO:0000318"/>
    <property type="project" value="GO_Central"/>
</dbReference>
<dbReference type="CDD" id="cd02037">
    <property type="entry name" value="Mrp_NBP35"/>
    <property type="match status" value="1"/>
</dbReference>
<dbReference type="FunFam" id="3.40.50.300:FF:000427">
    <property type="entry name" value="Cytosolic Fe-S cluster assembly factor NUBP1"/>
    <property type="match status" value="1"/>
</dbReference>
<dbReference type="Gene3D" id="3.40.50.300">
    <property type="entry name" value="P-loop containing nucleotide triphosphate hydrolases"/>
    <property type="match status" value="1"/>
</dbReference>
<dbReference type="HAMAP" id="MF_02040">
    <property type="entry name" value="Mrp_NBP35"/>
    <property type="match status" value="1"/>
</dbReference>
<dbReference type="HAMAP" id="MF_03038">
    <property type="entry name" value="NUBP1"/>
    <property type="match status" value="1"/>
</dbReference>
<dbReference type="InterPro" id="IPR000808">
    <property type="entry name" value="Mrp-like_CS"/>
</dbReference>
<dbReference type="InterPro" id="IPR019591">
    <property type="entry name" value="Mrp/NBP35_ATP-bd"/>
</dbReference>
<dbReference type="InterPro" id="IPR028601">
    <property type="entry name" value="NUBP1/Nbp35"/>
</dbReference>
<dbReference type="InterPro" id="IPR027417">
    <property type="entry name" value="P-loop_NTPase"/>
</dbReference>
<dbReference type="InterPro" id="IPR033756">
    <property type="entry name" value="YlxH/NBP35"/>
</dbReference>
<dbReference type="PANTHER" id="PTHR23264:SF35">
    <property type="entry name" value="CYTOSOLIC FE-S CLUSTER ASSEMBLY FACTOR NUBP1"/>
    <property type="match status" value="1"/>
</dbReference>
<dbReference type="PANTHER" id="PTHR23264">
    <property type="entry name" value="NUCLEOTIDE-BINDING PROTEIN NBP35 YEAST -RELATED"/>
    <property type="match status" value="1"/>
</dbReference>
<dbReference type="Pfam" id="PF10609">
    <property type="entry name" value="ParA"/>
    <property type="match status" value="1"/>
</dbReference>
<dbReference type="SUPFAM" id="SSF52540">
    <property type="entry name" value="P-loop containing nucleoside triphosphate hydrolases"/>
    <property type="match status" value="1"/>
</dbReference>
<dbReference type="PROSITE" id="PS01215">
    <property type="entry name" value="MRP"/>
    <property type="match status" value="1"/>
</dbReference>
<gene>
    <name type="primary">nbp35</name>
    <name type="ORF">AN2155</name>
</gene>
<name>NBP35_EMENI</name>
<reference key="1">
    <citation type="journal article" date="2005" name="Nature">
        <title>Sequencing of Aspergillus nidulans and comparative analysis with A. fumigatus and A. oryzae.</title>
        <authorList>
            <person name="Galagan J.E."/>
            <person name="Calvo S.E."/>
            <person name="Cuomo C."/>
            <person name="Ma L.-J."/>
            <person name="Wortman J.R."/>
            <person name="Batzoglou S."/>
            <person name="Lee S.-I."/>
            <person name="Bastuerkmen M."/>
            <person name="Spevak C.C."/>
            <person name="Clutterbuck J."/>
            <person name="Kapitonov V."/>
            <person name="Jurka J."/>
            <person name="Scazzocchio C."/>
            <person name="Farman M.L."/>
            <person name="Butler J."/>
            <person name="Purcell S."/>
            <person name="Harris S."/>
            <person name="Braus G.H."/>
            <person name="Draht O."/>
            <person name="Busch S."/>
            <person name="D'Enfert C."/>
            <person name="Bouchier C."/>
            <person name="Goldman G.H."/>
            <person name="Bell-Pedersen D."/>
            <person name="Griffiths-Jones S."/>
            <person name="Doonan J.H."/>
            <person name="Yu J."/>
            <person name="Vienken K."/>
            <person name="Pain A."/>
            <person name="Freitag M."/>
            <person name="Selker E.U."/>
            <person name="Archer D.B."/>
            <person name="Penalva M.A."/>
            <person name="Oakley B.R."/>
            <person name="Momany M."/>
            <person name="Tanaka T."/>
            <person name="Kumagai T."/>
            <person name="Asai K."/>
            <person name="Machida M."/>
            <person name="Nierman W.C."/>
            <person name="Denning D.W."/>
            <person name="Caddick M.X."/>
            <person name="Hynes M."/>
            <person name="Paoletti M."/>
            <person name="Fischer R."/>
            <person name="Miller B.L."/>
            <person name="Dyer P.S."/>
            <person name="Sachs M.S."/>
            <person name="Osmani S.A."/>
            <person name="Birren B.W."/>
        </authorList>
    </citation>
    <scope>NUCLEOTIDE SEQUENCE [LARGE SCALE GENOMIC DNA]</scope>
    <source>
        <strain>FGSC A4 / ATCC 38163 / CBS 112.46 / NRRL 194 / M139</strain>
    </source>
</reference>
<reference key="2">
    <citation type="journal article" date="2009" name="Fungal Genet. Biol.">
        <title>The 2008 update of the Aspergillus nidulans genome annotation: a community effort.</title>
        <authorList>
            <person name="Wortman J.R."/>
            <person name="Gilsenan J.M."/>
            <person name="Joardar V."/>
            <person name="Deegan J."/>
            <person name="Clutterbuck J."/>
            <person name="Andersen M.R."/>
            <person name="Archer D."/>
            <person name="Bencina M."/>
            <person name="Braus G."/>
            <person name="Coutinho P."/>
            <person name="von Dohren H."/>
            <person name="Doonan J."/>
            <person name="Driessen A.J."/>
            <person name="Durek P."/>
            <person name="Espeso E."/>
            <person name="Fekete E."/>
            <person name="Flipphi M."/>
            <person name="Estrada C.G."/>
            <person name="Geysens S."/>
            <person name="Goldman G."/>
            <person name="de Groot P.W."/>
            <person name="Hansen K."/>
            <person name="Harris S.D."/>
            <person name="Heinekamp T."/>
            <person name="Helmstaedt K."/>
            <person name="Henrissat B."/>
            <person name="Hofmann G."/>
            <person name="Homan T."/>
            <person name="Horio T."/>
            <person name="Horiuchi H."/>
            <person name="James S."/>
            <person name="Jones M."/>
            <person name="Karaffa L."/>
            <person name="Karanyi Z."/>
            <person name="Kato M."/>
            <person name="Keller N."/>
            <person name="Kelly D.E."/>
            <person name="Kiel J.A."/>
            <person name="Kim J.M."/>
            <person name="van der Klei I.J."/>
            <person name="Klis F.M."/>
            <person name="Kovalchuk A."/>
            <person name="Krasevec N."/>
            <person name="Kubicek C.P."/>
            <person name="Liu B."/>
            <person name="Maccabe A."/>
            <person name="Meyer V."/>
            <person name="Mirabito P."/>
            <person name="Miskei M."/>
            <person name="Mos M."/>
            <person name="Mullins J."/>
            <person name="Nelson D.R."/>
            <person name="Nielsen J."/>
            <person name="Oakley B.R."/>
            <person name="Osmani S.A."/>
            <person name="Pakula T."/>
            <person name="Paszewski A."/>
            <person name="Paulsen I."/>
            <person name="Pilsyk S."/>
            <person name="Pocsi I."/>
            <person name="Punt P.J."/>
            <person name="Ram A.F."/>
            <person name="Ren Q."/>
            <person name="Robellet X."/>
            <person name="Robson G."/>
            <person name="Seiboth B."/>
            <person name="van Solingen P."/>
            <person name="Specht T."/>
            <person name="Sun J."/>
            <person name="Taheri-Talesh N."/>
            <person name="Takeshita N."/>
            <person name="Ussery D."/>
            <person name="vanKuyk P.A."/>
            <person name="Visser H."/>
            <person name="van de Vondervoort P.J."/>
            <person name="de Vries R.P."/>
            <person name="Walton J."/>
            <person name="Xiang X."/>
            <person name="Xiong Y."/>
            <person name="Zeng A.P."/>
            <person name="Brandt B.W."/>
            <person name="Cornell M.J."/>
            <person name="van den Hondel C.A."/>
            <person name="Visser J."/>
            <person name="Oliver S.G."/>
            <person name="Turner G."/>
        </authorList>
    </citation>
    <scope>GENOME REANNOTATION</scope>
    <source>
        <strain>FGSC A4 / ATCC 38163 / CBS 112.46 / NRRL 194 / M139</strain>
    </source>
</reference>